<gene>
    <name type="primary">ZSCAN10</name>
    <name type="synonym">ZNF206</name>
</gene>
<evidence type="ECO:0000250" key="1">
    <source>
        <dbReference type="UniProtKB" id="Q3URR7"/>
    </source>
</evidence>
<evidence type="ECO:0000255" key="2">
    <source>
        <dbReference type="PROSITE-ProRule" id="PRU00042"/>
    </source>
</evidence>
<evidence type="ECO:0000255" key="3">
    <source>
        <dbReference type="PROSITE-ProRule" id="PRU00187"/>
    </source>
</evidence>
<evidence type="ECO:0000256" key="4">
    <source>
        <dbReference type="SAM" id="MobiDB-lite"/>
    </source>
</evidence>
<evidence type="ECO:0000269" key="5">
    <source>
    </source>
</evidence>
<evidence type="ECO:0000269" key="6">
    <source>
    </source>
</evidence>
<evidence type="ECO:0000303" key="7">
    <source>
    </source>
</evidence>
<evidence type="ECO:0000303" key="8">
    <source>
    </source>
</evidence>
<evidence type="ECO:0000305" key="9"/>
<evidence type="ECO:0007744" key="10">
    <source>
    </source>
</evidence>
<keyword id="KW-0025">Alternative splicing</keyword>
<keyword id="KW-0225">Disease variant</keyword>
<keyword id="KW-0238">DNA-binding</keyword>
<keyword id="KW-0991">Intellectual disability</keyword>
<keyword id="KW-0479">Metal-binding</keyword>
<keyword id="KW-0488">Methylation</keyword>
<keyword id="KW-0539">Nucleus</keyword>
<keyword id="KW-0597">Phosphoprotein</keyword>
<keyword id="KW-1267">Proteomics identification</keyword>
<keyword id="KW-1185">Reference proteome</keyword>
<keyword id="KW-0677">Repeat</keyword>
<keyword id="KW-0804">Transcription</keyword>
<keyword id="KW-0805">Transcription regulation</keyword>
<keyword id="KW-0862">Zinc</keyword>
<keyword id="KW-0863">Zinc-finger</keyword>
<name>ZSC10_HUMAN</name>
<reference key="1">
    <citation type="journal article" date="2004" name="Nat. Genet.">
        <title>Complete sequencing and characterization of 21,243 full-length human cDNAs.</title>
        <authorList>
            <person name="Ota T."/>
            <person name="Suzuki Y."/>
            <person name="Nishikawa T."/>
            <person name="Otsuki T."/>
            <person name="Sugiyama T."/>
            <person name="Irie R."/>
            <person name="Wakamatsu A."/>
            <person name="Hayashi K."/>
            <person name="Sato H."/>
            <person name="Nagai K."/>
            <person name="Kimura K."/>
            <person name="Makita H."/>
            <person name="Sekine M."/>
            <person name="Obayashi M."/>
            <person name="Nishi T."/>
            <person name="Shibahara T."/>
            <person name="Tanaka T."/>
            <person name="Ishii S."/>
            <person name="Yamamoto J."/>
            <person name="Saito K."/>
            <person name="Kawai Y."/>
            <person name="Isono Y."/>
            <person name="Nakamura Y."/>
            <person name="Nagahari K."/>
            <person name="Murakami K."/>
            <person name="Yasuda T."/>
            <person name="Iwayanagi T."/>
            <person name="Wagatsuma M."/>
            <person name="Shiratori A."/>
            <person name="Sudo H."/>
            <person name="Hosoiri T."/>
            <person name="Kaku Y."/>
            <person name="Kodaira H."/>
            <person name="Kondo H."/>
            <person name="Sugawara M."/>
            <person name="Takahashi M."/>
            <person name="Kanda K."/>
            <person name="Yokoi T."/>
            <person name="Furuya T."/>
            <person name="Kikkawa E."/>
            <person name="Omura Y."/>
            <person name="Abe K."/>
            <person name="Kamihara K."/>
            <person name="Katsuta N."/>
            <person name="Sato K."/>
            <person name="Tanikawa M."/>
            <person name="Yamazaki M."/>
            <person name="Ninomiya K."/>
            <person name="Ishibashi T."/>
            <person name="Yamashita H."/>
            <person name="Murakawa K."/>
            <person name="Fujimori K."/>
            <person name="Tanai H."/>
            <person name="Kimata M."/>
            <person name="Watanabe M."/>
            <person name="Hiraoka S."/>
            <person name="Chiba Y."/>
            <person name="Ishida S."/>
            <person name="Ono Y."/>
            <person name="Takiguchi S."/>
            <person name="Watanabe S."/>
            <person name="Yosida M."/>
            <person name="Hotuta T."/>
            <person name="Kusano J."/>
            <person name="Kanehori K."/>
            <person name="Takahashi-Fujii A."/>
            <person name="Hara H."/>
            <person name="Tanase T.-O."/>
            <person name="Nomura Y."/>
            <person name="Togiya S."/>
            <person name="Komai F."/>
            <person name="Hara R."/>
            <person name="Takeuchi K."/>
            <person name="Arita M."/>
            <person name="Imose N."/>
            <person name="Musashino K."/>
            <person name="Yuuki H."/>
            <person name="Oshima A."/>
            <person name="Sasaki N."/>
            <person name="Aotsuka S."/>
            <person name="Yoshikawa Y."/>
            <person name="Matsunawa H."/>
            <person name="Ichihara T."/>
            <person name="Shiohata N."/>
            <person name="Sano S."/>
            <person name="Moriya S."/>
            <person name="Momiyama H."/>
            <person name="Satoh N."/>
            <person name="Takami S."/>
            <person name="Terashima Y."/>
            <person name="Suzuki O."/>
            <person name="Nakagawa S."/>
            <person name="Senoh A."/>
            <person name="Mizoguchi H."/>
            <person name="Goto Y."/>
            <person name="Shimizu F."/>
            <person name="Wakebe H."/>
            <person name="Hishigaki H."/>
            <person name="Watanabe T."/>
            <person name="Sugiyama A."/>
            <person name="Takemoto M."/>
            <person name="Kawakami B."/>
            <person name="Yamazaki M."/>
            <person name="Watanabe K."/>
            <person name="Kumagai A."/>
            <person name="Itakura S."/>
            <person name="Fukuzumi Y."/>
            <person name="Fujimori Y."/>
            <person name="Komiyama M."/>
            <person name="Tashiro H."/>
            <person name="Tanigami A."/>
            <person name="Fujiwara T."/>
            <person name="Ono T."/>
            <person name="Yamada K."/>
            <person name="Fujii Y."/>
            <person name="Ozaki K."/>
            <person name="Hirao M."/>
            <person name="Ohmori Y."/>
            <person name="Kawabata A."/>
            <person name="Hikiji T."/>
            <person name="Kobatake N."/>
            <person name="Inagaki H."/>
            <person name="Ikema Y."/>
            <person name="Okamoto S."/>
            <person name="Okitani R."/>
            <person name="Kawakami T."/>
            <person name="Noguchi S."/>
            <person name="Itoh T."/>
            <person name="Shigeta K."/>
            <person name="Senba T."/>
            <person name="Matsumura K."/>
            <person name="Nakajima Y."/>
            <person name="Mizuno T."/>
            <person name="Morinaga M."/>
            <person name="Sasaki M."/>
            <person name="Togashi T."/>
            <person name="Oyama M."/>
            <person name="Hata H."/>
            <person name="Watanabe M."/>
            <person name="Komatsu T."/>
            <person name="Mizushima-Sugano J."/>
            <person name="Satoh T."/>
            <person name="Shirai Y."/>
            <person name="Takahashi Y."/>
            <person name="Nakagawa K."/>
            <person name="Okumura K."/>
            <person name="Nagase T."/>
            <person name="Nomura N."/>
            <person name="Kikuchi H."/>
            <person name="Masuho Y."/>
            <person name="Yamashita R."/>
            <person name="Nakai K."/>
            <person name="Yada T."/>
            <person name="Nakamura Y."/>
            <person name="Ohara O."/>
            <person name="Isogai T."/>
            <person name="Sugano S."/>
        </authorList>
    </citation>
    <scope>NUCLEOTIDE SEQUENCE [LARGE SCALE MRNA] (ISOFORM 2)</scope>
    <scope>NUCLEOTIDE SEQUENCE [LARGE SCALE MRNA] OF 27-780 (ISOFORM 1)</scope>
    <source>
        <tissue>Teratocarcinoma</tissue>
    </source>
</reference>
<reference key="2">
    <citation type="journal article" date="2004" name="Nature">
        <title>The sequence and analysis of duplication-rich human chromosome 16.</title>
        <authorList>
            <person name="Martin J."/>
            <person name="Han C."/>
            <person name="Gordon L.A."/>
            <person name="Terry A."/>
            <person name="Prabhakar S."/>
            <person name="She X."/>
            <person name="Xie G."/>
            <person name="Hellsten U."/>
            <person name="Chan Y.M."/>
            <person name="Altherr M."/>
            <person name="Couronne O."/>
            <person name="Aerts A."/>
            <person name="Bajorek E."/>
            <person name="Black S."/>
            <person name="Blumer H."/>
            <person name="Branscomb E."/>
            <person name="Brown N.C."/>
            <person name="Bruno W.J."/>
            <person name="Buckingham J.M."/>
            <person name="Callen D.F."/>
            <person name="Campbell C.S."/>
            <person name="Campbell M.L."/>
            <person name="Campbell E.W."/>
            <person name="Caoile C."/>
            <person name="Challacombe J.F."/>
            <person name="Chasteen L.A."/>
            <person name="Chertkov O."/>
            <person name="Chi H.C."/>
            <person name="Christensen M."/>
            <person name="Clark L.M."/>
            <person name="Cohn J.D."/>
            <person name="Denys M."/>
            <person name="Detter J.C."/>
            <person name="Dickson M."/>
            <person name="Dimitrijevic-Bussod M."/>
            <person name="Escobar J."/>
            <person name="Fawcett J.J."/>
            <person name="Flowers D."/>
            <person name="Fotopulos D."/>
            <person name="Glavina T."/>
            <person name="Gomez M."/>
            <person name="Gonzales E."/>
            <person name="Goodstein D."/>
            <person name="Goodwin L.A."/>
            <person name="Grady D.L."/>
            <person name="Grigoriev I."/>
            <person name="Groza M."/>
            <person name="Hammon N."/>
            <person name="Hawkins T."/>
            <person name="Haydu L."/>
            <person name="Hildebrand C.E."/>
            <person name="Huang W."/>
            <person name="Israni S."/>
            <person name="Jett J."/>
            <person name="Jewett P.B."/>
            <person name="Kadner K."/>
            <person name="Kimball H."/>
            <person name="Kobayashi A."/>
            <person name="Krawczyk M.-C."/>
            <person name="Leyba T."/>
            <person name="Longmire J.L."/>
            <person name="Lopez F."/>
            <person name="Lou Y."/>
            <person name="Lowry S."/>
            <person name="Ludeman T."/>
            <person name="Manohar C.F."/>
            <person name="Mark G.A."/>
            <person name="McMurray K.L."/>
            <person name="Meincke L.J."/>
            <person name="Morgan J."/>
            <person name="Moyzis R.K."/>
            <person name="Mundt M.O."/>
            <person name="Munk A.C."/>
            <person name="Nandkeshwar R.D."/>
            <person name="Pitluck S."/>
            <person name="Pollard M."/>
            <person name="Predki P."/>
            <person name="Parson-Quintana B."/>
            <person name="Ramirez L."/>
            <person name="Rash S."/>
            <person name="Retterer J."/>
            <person name="Ricke D.O."/>
            <person name="Robinson D.L."/>
            <person name="Rodriguez A."/>
            <person name="Salamov A."/>
            <person name="Saunders E.H."/>
            <person name="Scott D."/>
            <person name="Shough T."/>
            <person name="Stallings R.L."/>
            <person name="Stalvey M."/>
            <person name="Sutherland R.D."/>
            <person name="Tapia R."/>
            <person name="Tesmer J.G."/>
            <person name="Thayer N."/>
            <person name="Thompson L.S."/>
            <person name="Tice H."/>
            <person name="Torney D.C."/>
            <person name="Tran-Gyamfi M."/>
            <person name="Tsai M."/>
            <person name="Ulanovsky L.E."/>
            <person name="Ustaszewska A."/>
            <person name="Vo N."/>
            <person name="White P.S."/>
            <person name="Williams A.L."/>
            <person name="Wills P.L."/>
            <person name="Wu J.-R."/>
            <person name="Wu K."/>
            <person name="Yang J."/>
            <person name="DeJong P."/>
            <person name="Bruce D."/>
            <person name="Doggett N.A."/>
            <person name="Deaven L."/>
            <person name="Schmutz J."/>
            <person name="Grimwood J."/>
            <person name="Richardson P."/>
            <person name="Rokhsar D.S."/>
            <person name="Eichler E.E."/>
            <person name="Gilna P."/>
            <person name="Lucas S.M."/>
            <person name="Myers R.M."/>
            <person name="Rubin E.M."/>
            <person name="Pennacchio L.A."/>
        </authorList>
    </citation>
    <scope>NUCLEOTIDE SEQUENCE [LARGE SCALE GENOMIC DNA]</scope>
</reference>
<reference key="3">
    <citation type="journal article" date="2004" name="Genome Res.">
        <title>The status, quality, and expansion of the NIH full-length cDNA project: the Mammalian Gene Collection (MGC).</title>
        <authorList>
            <consortium name="The MGC Project Team"/>
        </authorList>
    </citation>
    <scope>NUCLEOTIDE SEQUENCE [LARGE SCALE MRNA] (ISOFORM 3)</scope>
</reference>
<reference key="4">
    <citation type="journal article" date="2011" name="Sci. Signal.">
        <title>System-wide temporal characterization of the proteome and phosphoproteome of human embryonic stem cell differentiation.</title>
        <authorList>
            <person name="Rigbolt K.T."/>
            <person name="Prokhorova T.A."/>
            <person name="Akimov V."/>
            <person name="Henningsen J."/>
            <person name="Johansen P.T."/>
            <person name="Kratchmarova I."/>
            <person name="Kassem M."/>
            <person name="Mann M."/>
            <person name="Olsen J.V."/>
            <person name="Blagoev B."/>
        </authorList>
    </citation>
    <scope>PHOSPHORYLATION [LARGE SCALE ANALYSIS] AT SER-162; SER-208 AND THR-268</scope>
    <scope>IDENTIFICATION BY MASS SPECTROMETRY [LARGE SCALE ANALYSIS]</scope>
</reference>
<reference key="5">
    <citation type="journal article" date="2016" name="J. Biol. Chem.">
        <title>Substrate specificity of the HEMK2 protein glutamine methyltransferase and identification of novel substrates.</title>
        <authorList>
            <person name="Kusevic D."/>
            <person name="Kudithipudi S."/>
            <person name="Jeltsch A."/>
        </authorList>
    </citation>
    <scope>METHYLATION AT GLN-483</scope>
    <scope>MUTAGENESIS OF GLN-483</scope>
</reference>
<reference key="6">
    <citation type="journal article" date="2024" name="Brain">
        <title>ZSCAN10 deficiency causes a neurodevelopmental disorder with characteristic oto-facial malformations.</title>
        <authorList>
            <person name="Laugwitz L."/>
            <person name="Cheng F."/>
            <person name="Collins S.C."/>
            <person name="Hustinx A."/>
            <person name="Navarro N."/>
            <person name="Welsch S."/>
            <person name="Cox H."/>
            <person name="Hsieh T.C."/>
            <person name="Vijayananth A."/>
            <person name="Buchert R."/>
            <person name="Bender B."/>
            <person name="Efthymiou S."/>
            <person name="Murphy D."/>
            <person name="Zafar F."/>
            <person name="Rana N."/>
            <person name="Grasshoff U."/>
            <person name="Falb R.J."/>
            <person name="Grimmel M."/>
            <person name="Seibt A."/>
            <person name="Zheng W."/>
            <person name="Ghaedi H."/>
            <person name="Thirion M."/>
            <person name="Couette S."/>
            <person name="Azizimalamiri R."/>
            <person name="Sadeghian S."/>
            <person name="Galehdari H."/>
            <person name="Zamani M."/>
            <person name="Zeighami J."/>
            <person name="Sedaghat A."/>
            <person name="Ramshe S.M."/>
            <person name="Zare A."/>
            <person name="Alipoor B."/>
            <person name="Klee D."/>
            <person name="Sturm M."/>
            <person name="Ossowski S."/>
            <person name="Houlden H."/>
            <person name="Riess O."/>
            <person name="Wieczorek D."/>
            <person name="Gavin R."/>
            <person name="Maroofian R."/>
            <person name="Krawitz P."/>
            <person name="Yalcin B."/>
            <person name="Distelmaier F."/>
            <person name="Haack T.B."/>
        </authorList>
    </citation>
    <scope>INVOLVEMENT IN OFNS</scope>
    <scope>VARIANTS OFNS 417-SER--TYR-780 DEL AND 486-GLN--TYR-780 DEL</scope>
    <scope>CHARACTERIZATION OF VARIANT OFNS 486-GLN--TYR-780 DEL</scope>
    <scope>SUBCELLULAR LOCATION</scope>
</reference>
<feature type="chain" id="PRO_0000047452" description="Zinc finger and SCAN domain-containing protein 10">
    <location>
        <begin position="1"/>
        <end position="780"/>
    </location>
</feature>
<feature type="domain" description="SCAN box" evidence="3">
    <location>
        <begin position="56"/>
        <end position="126"/>
    </location>
</feature>
<feature type="zinc finger region" description="C2H2-type 1" evidence="2">
    <location>
        <begin position="347"/>
        <end position="370"/>
    </location>
</feature>
<feature type="zinc finger region" description="C2H2-type 2" evidence="2">
    <location>
        <begin position="376"/>
        <end position="398"/>
    </location>
</feature>
<feature type="zinc finger region" description="C2H2-type 3" evidence="2">
    <location>
        <begin position="404"/>
        <end position="426"/>
    </location>
</feature>
<feature type="zinc finger region" description="C2H2-type 4" evidence="2">
    <location>
        <begin position="432"/>
        <end position="454"/>
    </location>
</feature>
<feature type="zinc finger region" description="C2H2-type 5" evidence="2">
    <location>
        <begin position="476"/>
        <end position="498"/>
    </location>
</feature>
<feature type="zinc finger region" description="C2H2-type 6" evidence="2">
    <location>
        <begin position="522"/>
        <end position="544"/>
    </location>
</feature>
<feature type="zinc finger region" description="C2H2-type 7" evidence="2">
    <location>
        <begin position="550"/>
        <end position="572"/>
    </location>
</feature>
<feature type="zinc finger region" description="C2H2-type 8" evidence="2">
    <location>
        <begin position="578"/>
        <end position="600"/>
    </location>
</feature>
<feature type="zinc finger region" description="C2H2-type 9" evidence="2">
    <location>
        <begin position="606"/>
        <end position="628"/>
    </location>
</feature>
<feature type="zinc finger region" description="C2H2-type 10" evidence="2">
    <location>
        <begin position="634"/>
        <end position="656"/>
    </location>
</feature>
<feature type="zinc finger region" description="C2H2-type 11" evidence="2">
    <location>
        <begin position="662"/>
        <end position="684"/>
    </location>
</feature>
<feature type="zinc finger region" description="C2H2-type 12" evidence="2">
    <location>
        <begin position="690"/>
        <end position="712"/>
    </location>
</feature>
<feature type="zinc finger region" description="C2H2-type 13" evidence="2">
    <location>
        <begin position="724"/>
        <end position="746"/>
    </location>
</feature>
<feature type="zinc finger region" description="C2H2-type 14" evidence="2">
    <location>
        <begin position="752"/>
        <end position="774"/>
    </location>
</feature>
<feature type="region of interest" description="Disordered" evidence="4">
    <location>
        <begin position="1"/>
        <end position="38"/>
    </location>
</feature>
<feature type="region of interest" description="Disordered" evidence="4">
    <location>
        <begin position="153"/>
        <end position="237"/>
    </location>
</feature>
<feature type="region of interest" description="Disordered" evidence="4">
    <location>
        <begin position="255"/>
        <end position="324"/>
    </location>
</feature>
<feature type="region of interest" description="Disordered" evidence="4">
    <location>
        <begin position="492"/>
        <end position="520"/>
    </location>
</feature>
<feature type="compositionally biased region" description="Basic and acidic residues" evidence="4">
    <location>
        <begin position="29"/>
        <end position="38"/>
    </location>
</feature>
<feature type="compositionally biased region" description="Polar residues" evidence="4">
    <location>
        <begin position="202"/>
        <end position="224"/>
    </location>
</feature>
<feature type="compositionally biased region" description="Basic and acidic residues" evidence="4">
    <location>
        <begin position="268"/>
        <end position="280"/>
    </location>
</feature>
<feature type="compositionally biased region" description="Basic and acidic residues" evidence="4">
    <location>
        <begin position="498"/>
        <end position="520"/>
    </location>
</feature>
<feature type="modified residue" description="Phosphoserine" evidence="10">
    <location>
        <position position="162"/>
    </location>
</feature>
<feature type="modified residue" description="Phosphoserine" evidence="10">
    <location>
        <position position="208"/>
    </location>
</feature>
<feature type="modified residue" description="Phosphothreonine" evidence="10">
    <location>
        <position position="268"/>
    </location>
</feature>
<feature type="modified residue" description="N5-methylglutamine" evidence="5">
    <location>
        <position position="483"/>
    </location>
</feature>
<feature type="splice variant" id="VSP_039221" description="In isoform 2." evidence="7">
    <location>
        <begin position="1"/>
        <end position="394"/>
    </location>
</feature>
<feature type="splice variant" id="VSP_054601" description="In isoform 3." evidence="8">
    <original>MLGESVPAAVEQEQLGEVKLEEEEAVSPEDPRRPESRLRPEVAHQLFRCFQYQEDMGPRASLSRLRELCGHWLRPALHTKKQILE</original>
    <variation>MLPVSGGHGATGVPEPAPGALRPLAAAGSAHQETDPGAAGAGAVPECAASAPPGPPAGAAAQGWGGGGAAARGHPPGAQPRGAAG</variation>
    <location>
        <begin position="1"/>
        <end position="85"/>
    </location>
</feature>
<feature type="splice variant" id="VSP_054602" description="In isoform 3." evidence="8">
    <location>
        <begin position="86"/>
        <end position="222"/>
    </location>
</feature>
<feature type="sequence variant" id="VAR_090029" description="In OFNS; likely pathogenic." evidence="6">
    <location>
        <begin position="417"/>
        <end position="780"/>
    </location>
</feature>
<feature type="sequence variant" id="VAR_090030" description="In OFNS; pathogenic; loss of nuclear localization and loss of binding to POU5F1 promoter in vitro." evidence="6">
    <location>
        <begin position="486"/>
        <end position="780"/>
    </location>
</feature>
<feature type="mutagenesis site" description="Abolishes methylation by N6AMT1." evidence="5">
    <original>Q</original>
    <variation>R</variation>
    <location>
        <position position="483"/>
    </location>
</feature>
<proteinExistence type="evidence at protein level"/>
<comment type="function">
    <text evidence="1">Embryonic stem (ES) cell-specific transcription factor required to maintain ES cell pluripotency. Can both activate and /or repress expression of target genes, depending on the context. Specifically binds the 5'-[GA]CGCNNGCG[CT]-3' DNA consensus sequence. Regulates expression of POU5F1/OCT4, ZSCAN4 and ALYREF/THOC4.</text>
</comment>
<comment type="subunit">
    <text evidence="1">Interacts with POU5F1/OCT4 and SOX2.</text>
</comment>
<comment type="interaction">
    <interactant intactId="EBI-14934888">
        <id>Q96SZ4</id>
    </interactant>
    <interactant intactId="EBI-10172290">
        <id>P60409</id>
        <label>KRTAP10-7</label>
    </interactant>
    <organismsDiffer>false</organismsDiffer>
    <experiments>3</experiments>
</comment>
<comment type="subcellular location">
    <subcellularLocation>
        <location evidence="3 6">Nucleus</location>
    </subcellularLocation>
</comment>
<comment type="alternative products">
    <event type="alternative splicing"/>
    <isoform>
        <id>Q96SZ4-1</id>
        <name>1</name>
        <sequence type="displayed"/>
    </isoform>
    <isoform>
        <id>Q96SZ4-2</id>
        <name>2</name>
        <sequence type="described" ref="VSP_039221"/>
    </isoform>
    <isoform>
        <id>Q96SZ4-3</id>
        <name>3</name>
        <sequence type="described" ref="VSP_054601 VSP_054602"/>
    </isoform>
</comment>
<comment type="PTM">
    <text evidence="5">Methylated at Gln-483 by N6AMT1.</text>
</comment>
<comment type="disease" evidence="6">
    <disease id="DI-06934">
        <name>Otofacial neurodevelopmental syndrome</name>
        <acronym>OFNS</acronym>
        <description>An autosomal recessive disorder characterized by mild to severe cognitive impairment, delayed or absent speech development, and behavioral abnormalities. Affected individuals have outer and inner ear malformations, hearing impairment, and variable facial asymmetry.</description>
        <dbReference type="MIM" id="620910"/>
    </disease>
    <text>The disease is caused by variants affecting the gene represented in this entry.</text>
</comment>
<comment type="sequence caution" evidence="9">
    <conflict type="erroneous initiation">
        <sequence resource="EMBL-CDS" id="AAI14453"/>
    </conflict>
    <text>Extended N-terminus.</text>
</comment>
<comment type="sequence caution" evidence="9">
    <conflict type="erroneous initiation">
        <sequence resource="EMBL-CDS" id="BAB55124"/>
    </conflict>
    <text>Truncated N-terminus.</text>
</comment>
<dbReference type="EMBL" id="AK027455">
    <property type="protein sequence ID" value="BAB55124.1"/>
    <property type="status" value="ALT_INIT"/>
    <property type="molecule type" value="mRNA"/>
</dbReference>
<dbReference type="EMBL" id="AK074736">
    <property type="protein sequence ID" value="BAG51995.1"/>
    <property type="molecule type" value="mRNA"/>
</dbReference>
<dbReference type="EMBL" id="AC108134">
    <property type="status" value="NOT_ANNOTATED_CDS"/>
    <property type="molecule type" value="Genomic_DNA"/>
</dbReference>
<dbReference type="EMBL" id="BC114452">
    <property type="protein sequence ID" value="AAI14453.1"/>
    <property type="status" value="ALT_INIT"/>
    <property type="molecule type" value="mRNA"/>
</dbReference>
<dbReference type="CCDS" id="CCDS10493.2">
    <molecule id="Q96SZ4-1"/>
</dbReference>
<dbReference type="CCDS" id="CCDS61813.1">
    <molecule id="Q96SZ4-2"/>
</dbReference>
<dbReference type="CCDS" id="CCDS61814.1">
    <molecule id="Q96SZ4-3"/>
</dbReference>
<dbReference type="RefSeq" id="NP_001269344.1">
    <molecule id="Q96SZ4-2"/>
    <property type="nucleotide sequence ID" value="NM_001282415.2"/>
</dbReference>
<dbReference type="RefSeq" id="NP_001269345.1">
    <molecule id="Q96SZ4-3"/>
    <property type="nucleotide sequence ID" value="NM_001282416.2"/>
</dbReference>
<dbReference type="RefSeq" id="NP_001352202.1">
    <molecule id="Q96SZ4-2"/>
    <property type="nucleotide sequence ID" value="NM_001365273.1"/>
</dbReference>
<dbReference type="RefSeq" id="NP_116194.2">
    <molecule id="Q96SZ4-1"/>
    <property type="nucleotide sequence ID" value="NM_032805.3"/>
</dbReference>
<dbReference type="RefSeq" id="XP_016879280.1">
    <property type="nucleotide sequence ID" value="XM_017023791.1"/>
</dbReference>
<dbReference type="SMR" id="Q96SZ4"/>
<dbReference type="BioGRID" id="124331">
    <property type="interactions" value="3"/>
</dbReference>
<dbReference type="FunCoup" id="Q96SZ4">
    <property type="interactions" value="362"/>
</dbReference>
<dbReference type="IntAct" id="Q96SZ4">
    <property type="interactions" value="1"/>
</dbReference>
<dbReference type="STRING" id="9606.ENSP00000458879"/>
<dbReference type="GlyGen" id="Q96SZ4">
    <property type="glycosylation" value="1 site, 1 O-linked glycan (1 site)"/>
</dbReference>
<dbReference type="iPTMnet" id="Q96SZ4"/>
<dbReference type="PhosphoSitePlus" id="Q96SZ4"/>
<dbReference type="BioMuta" id="ZSCAN10"/>
<dbReference type="DMDM" id="55976759"/>
<dbReference type="jPOST" id="Q96SZ4"/>
<dbReference type="MassIVE" id="Q96SZ4"/>
<dbReference type="PaxDb" id="9606-ENSP00000252463"/>
<dbReference type="PeptideAtlas" id="Q96SZ4"/>
<dbReference type="ProteomicsDB" id="38166"/>
<dbReference type="ProteomicsDB" id="78162">
    <molecule id="Q96SZ4-1"/>
</dbReference>
<dbReference type="ProteomicsDB" id="78163">
    <molecule id="Q96SZ4-2"/>
</dbReference>
<dbReference type="Antibodypedia" id="58023">
    <property type="antibodies" value="24 antibodies from 11 providers"/>
</dbReference>
<dbReference type="DNASU" id="84891"/>
<dbReference type="Ensembl" id="ENST00000538082.5">
    <molecule id="Q96SZ4-3"/>
    <property type="protein sequence ID" value="ENSP00000440047.2"/>
    <property type="gene ID" value="ENSG00000130182.8"/>
</dbReference>
<dbReference type="Ensembl" id="ENST00000575108.5">
    <molecule id="Q96SZ4-2"/>
    <property type="protein sequence ID" value="ENSP00000459520.1"/>
    <property type="gene ID" value="ENSG00000130182.8"/>
</dbReference>
<dbReference type="Ensembl" id="ENST00000576985.6">
    <molecule id="Q96SZ4-1"/>
    <property type="protein sequence ID" value="ENSP00000458879.2"/>
    <property type="gene ID" value="ENSG00000130182.8"/>
</dbReference>
<dbReference type="GeneID" id="84891"/>
<dbReference type="KEGG" id="hsa:84891"/>
<dbReference type="MANE-Select" id="ENST00000576985.6">
    <property type="protein sequence ID" value="ENSP00000458879.2"/>
    <property type="RefSeq nucleotide sequence ID" value="NM_032805.3"/>
    <property type="RefSeq protein sequence ID" value="NP_116194.2"/>
</dbReference>
<dbReference type="UCSC" id="uc002ctv.3">
    <molecule id="Q96SZ4-1"/>
    <property type="organism name" value="human"/>
</dbReference>
<dbReference type="AGR" id="HGNC:12997"/>
<dbReference type="CTD" id="84891"/>
<dbReference type="DisGeNET" id="84891"/>
<dbReference type="GeneCards" id="ZSCAN10"/>
<dbReference type="HGNC" id="HGNC:12997">
    <property type="gene designation" value="ZSCAN10"/>
</dbReference>
<dbReference type="HPA" id="ENSG00000130182">
    <property type="expression patterns" value="Not detected"/>
</dbReference>
<dbReference type="MalaCards" id="ZSCAN10"/>
<dbReference type="MIM" id="618365">
    <property type="type" value="gene"/>
</dbReference>
<dbReference type="MIM" id="620910">
    <property type="type" value="phenotype"/>
</dbReference>
<dbReference type="neXtProt" id="NX_Q96SZ4"/>
<dbReference type="OpenTargets" id="ENSG00000130182"/>
<dbReference type="PharmGKB" id="PA162410957"/>
<dbReference type="VEuPathDB" id="HostDB:ENSG00000130182"/>
<dbReference type="eggNOG" id="KOG1721">
    <property type="taxonomic scope" value="Eukaryota"/>
</dbReference>
<dbReference type="GeneTree" id="ENSGT00940000162513"/>
<dbReference type="HOGENOM" id="CLU_002678_63_1_1"/>
<dbReference type="InParanoid" id="Q96SZ4"/>
<dbReference type="OrthoDB" id="6365676at2759"/>
<dbReference type="PAN-GO" id="Q96SZ4">
    <property type="GO annotations" value="4 GO annotations based on evolutionary models"/>
</dbReference>
<dbReference type="PhylomeDB" id="Q96SZ4"/>
<dbReference type="TreeFam" id="TF338010"/>
<dbReference type="PathwayCommons" id="Q96SZ4"/>
<dbReference type="Reactome" id="R-HSA-452723">
    <property type="pathway name" value="Transcriptional regulation of pluripotent stem cells"/>
</dbReference>
<dbReference type="SignaLink" id="Q96SZ4"/>
<dbReference type="BioGRID-ORCS" id="84891">
    <property type="hits" value="17 hits in 1169 CRISPR screens"/>
</dbReference>
<dbReference type="ChiTaRS" id="ZSCAN10">
    <property type="organism name" value="human"/>
</dbReference>
<dbReference type="GenomeRNAi" id="84891"/>
<dbReference type="Pharos" id="Q96SZ4">
    <property type="development level" value="Tdark"/>
</dbReference>
<dbReference type="PRO" id="PR:Q96SZ4"/>
<dbReference type="Proteomes" id="UP000005640">
    <property type="component" value="Chromosome 16"/>
</dbReference>
<dbReference type="RNAct" id="Q96SZ4">
    <property type="molecule type" value="protein"/>
</dbReference>
<dbReference type="Bgee" id="ENSG00000130182">
    <property type="expression patterns" value="Expressed in primordial germ cell in gonad and 65 other cell types or tissues"/>
</dbReference>
<dbReference type="ExpressionAtlas" id="Q96SZ4">
    <property type="expression patterns" value="baseline and differential"/>
</dbReference>
<dbReference type="GO" id="GO:0005654">
    <property type="term" value="C:nucleoplasm"/>
    <property type="evidence" value="ECO:0000304"/>
    <property type="project" value="Reactome"/>
</dbReference>
<dbReference type="GO" id="GO:0005634">
    <property type="term" value="C:nucleus"/>
    <property type="evidence" value="ECO:0000250"/>
    <property type="project" value="UniProtKB"/>
</dbReference>
<dbReference type="GO" id="GO:0003700">
    <property type="term" value="F:DNA-binding transcription factor activity"/>
    <property type="evidence" value="ECO:0000250"/>
    <property type="project" value="UniProtKB"/>
</dbReference>
<dbReference type="GO" id="GO:0000981">
    <property type="term" value="F:DNA-binding transcription factor activity, RNA polymerase II-specific"/>
    <property type="evidence" value="ECO:0000318"/>
    <property type="project" value="GO_Central"/>
</dbReference>
<dbReference type="GO" id="GO:0000978">
    <property type="term" value="F:RNA polymerase II cis-regulatory region sequence-specific DNA binding"/>
    <property type="evidence" value="ECO:0000318"/>
    <property type="project" value="GO_Central"/>
</dbReference>
<dbReference type="GO" id="GO:0043565">
    <property type="term" value="F:sequence-specific DNA binding"/>
    <property type="evidence" value="ECO:0000250"/>
    <property type="project" value="UniProtKB"/>
</dbReference>
<dbReference type="GO" id="GO:0008270">
    <property type="term" value="F:zinc ion binding"/>
    <property type="evidence" value="ECO:0007669"/>
    <property type="project" value="UniProtKB-KW"/>
</dbReference>
<dbReference type="GO" id="GO:0045892">
    <property type="term" value="P:negative regulation of DNA-templated transcription"/>
    <property type="evidence" value="ECO:0000250"/>
    <property type="project" value="UniProtKB"/>
</dbReference>
<dbReference type="GO" id="GO:0006357">
    <property type="term" value="P:regulation of transcription by RNA polymerase II"/>
    <property type="evidence" value="ECO:0000318"/>
    <property type="project" value="GO_Central"/>
</dbReference>
<dbReference type="CDD" id="cd07936">
    <property type="entry name" value="SCAN"/>
    <property type="match status" value="1"/>
</dbReference>
<dbReference type="FunFam" id="3.30.160.60:FF:000100">
    <property type="entry name" value="Zinc finger 45-like"/>
    <property type="match status" value="2"/>
</dbReference>
<dbReference type="FunFam" id="3.30.160.60:FF:000982">
    <property type="entry name" value="Zinc finger and SCAN domain containing 10"/>
    <property type="match status" value="2"/>
</dbReference>
<dbReference type="FunFam" id="3.30.160.60:FF:001080">
    <property type="entry name" value="Zinc finger and SCAN domain containing 10"/>
    <property type="match status" value="2"/>
</dbReference>
<dbReference type="FunFam" id="3.30.160.60:FF:001341">
    <property type="entry name" value="Zinc finger and SCAN domain containing 10"/>
    <property type="match status" value="2"/>
</dbReference>
<dbReference type="FunFam" id="3.30.160.60:FF:001917">
    <property type="entry name" value="Zinc finger and SCAN domain containing 10"/>
    <property type="match status" value="1"/>
</dbReference>
<dbReference type="FunFam" id="3.30.160.60:FF:000295">
    <property type="entry name" value="zinc finger protein 19"/>
    <property type="match status" value="1"/>
</dbReference>
<dbReference type="FunFam" id="1.10.4020.10:FF:000001">
    <property type="entry name" value="zinc finger protein 263 isoform X1"/>
    <property type="match status" value="1"/>
</dbReference>
<dbReference type="FunFam" id="3.30.160.60:FF:000290">
    <property type="entry name" value="Zinc finger protein 697 isoform X1"/>
    <property type="match status" value="1"/>
</dbReference>
<dbReference type="FunFam" id="3.30.160.60:FF:001111">
    <property type="entry name" value="Zinc finger protein 92 homolog"/>
    <property type="match status" value="1"/>
</dbReference>
<dbReference type="Gene3D" id="3.30.160.60">
    <property type="entry name" value="Classic Zinc Finger"/>
    <property type="match status" value="13"/>
</dbReference>
<dbReference type="Gene3D" id="1.10.4020.10">
    <property type="entry name" value="DNA breaking-rejoining enzymes"/>
    <property type="match status" value="1"/>
</dbReference>
<dbReference type="InterPro" id="IPR003309">
    <property type="entry name" value="SCAN_dom"/>
</dbReference>
<dbReference type="InterPro" id="IPR038269">
    <property type="entry name" value="SCAN_sf"/>
</dbReference>
<dbReference type="InterPro" id="IPR036236">
    <property type="entry name" value="Znf_C2H2_sf"/>
</dbReference>
<dbReference type="InterPro" id="IPR013087">
    <property type="entry name" value="Znf_C2H2_type"/>
</dbReference>
<dbReference type="PANTHER" id="PTHR24393:SF158">
    <property type="entry name" value="C2H2-TYPE DOMAIN-CONTAINING PROTEIN"/>
    <property type="match status" value="1"/>
</dbReference>
<dbReference type="PANTHER" id="PTHR24393">
    <property type="entry name" value="ZINC FINGER PROTEIN"/>
    <property type="match status" value="1"/>
</dbReference>
<dbReference type="Pfam" id="PF02023">
    <property type="entry name" value="SCAN"/>
    <property type="match status" value="1"/>
</dbReference>
<dbReference type="Pfam" id="PF00096">
    <property type="entry name" value="zf-C2H2"/>
    <property type="match status" value="12"/>
</dbReference>
<dbReference type="SMART" id="SM00431">
    <property type="entry name" value="SCAN"/>
    <property type="match status" value="1"/>
</dbReference>
<dbReference type="SMART" id="SM00355">
    <property type="entry name" value="ZnF_C2H2"/>
    <property type="match status" value="14"/>
</dbReference>
<dbReference type="SUPFAM" id="SSF57667">
    <property type="entry name" value="beta-beta-alpha zinc fingers"/>
    <property type="match status" value="8"/>
</dbReference>
<dbReference type="SUPFAM" id="SSF47353">
    <property type="entry name" value="Retrovirus capsid dimerization domain-like"/>
    <property type="match status" value="1"/>
</dbReference>
<dbReference type="PROSITE" id="PS50804">
    <property type="entry name" value="SCAN_BOX"/>
    <property type="match status" value="1"/>
</dbReference>
<dbReference type="PROSITE" id="PS00028">
    <property type="entry name" value="ZINC_FINGER_C2H2_1"/>
    <property type="match status" value="14"/>
</dbReference>
<dbReference type="PROSITE" id="PS50157">
    <property type="entry name" value="ZINC_FINGER_C2H2_2"/>
    <property type="match status" value="14"/>
</dbReference>
<sequence length="780" mass="86752">MLGESVPAAVEQEQLGEVKLEEEEAVSPEDPRRPESRLRPEVAHQLFRCFQYQEDMGPRASLSRLRELCGHWLRPALHTKKQILELLVLEQFLSVLPPHLLGRLQGQPLRDGEEVVLLLEGIHREPSHAGPLDFSCNAGKSCPRADVTLEEKGCASQVPSHSPKKELPAEEPSVLGPSDEPPRPQPRAAQPAEPGQWRLPPSSKQPLSPGPQKTFQALQESSPQGPSPWPEESSRDQELAAVLECLTFEDVPENKAWPAHPLGFGSRTPDKEEFKQEEPKGAAWPTPILAESQADSPGVPGEPCAQSLGRGAAASGPGEDGSLLGSSEILEVKVAEGVPEPNPELQFICADCGVSFPQLSRLKAHQLRSHPAGRSFLCLCCGKSFGRSSILKLHMRTHTDERPHACHLCGHRFRQSSHLSKHLLTHSSEPAFLCAECGRGFQRRASLVQHLLAHAQDQKPPCAPESKAEAPPLTDVLCSHCGQSFQRRSSLKRHLRIHARDKDRRSSEGSGSRRRDSDRRPFVCSDCGKAFRRSEHLVAHRRVHTGERPFSCQACGRSFTQSSQLVSHQRVHTGEKPYACPQCGKRFVRRASLARHLLTHGGPRPHHCTQCGKSFGQTQDLARHQRSHTGEKPCRCSECGEGFSQSAHLARHQRIHTGEKPHACDTCGHRFRNSSNLARHRRSHTGERPYSCQTCGRSFRRNAHLRRHLATHAEPGQEQAEPPQECVECGKSFSRSCNLLRHLLVHTGARPYSCTQCGRSFSRNSHLLRHLRTHARETLY</sequence>
<protein>
    <recommendedName>
        <fullName>Zinc finger and SCAN domain-containing protein 10</fullName>
    </recommendedName>
    <alternativeName>
        <fullName>Zinc finger protein 206</fullName>
    </alternativeName>
</protein>
<accession>Q96SZ4</accession>
<accession>B3KQD3</accession>
<accession>H0YFS6</accession>
<accession>Q1WWM2</accession>
<organism>
    <name type="scientific">Homo sapiens</name>
    <name type="common">Human</name>
    <dbReference type="NCBI Taxonomy" id="9606"/>
    <lineage>
        <taxon>Eukaryota</taxon>
        <taxon>Metazoa</taxon>
        <taxon>Chordata</taxon>
        <taxon>Craniata</taxon>
        <taxon>Vertebrata</taxon>
        <taxon>Euteleostomi</taxon>
        <taxon>Mammalia</taxon>
        <taxon>Eutheria</taxon>
        <taxon>Euarchontoglires</taxon>
        <taxon>Primates</taxon>
        <taxon>Haplorrhini</taxon>
        <taxon>Catarrhini</taxon>
        <taxon>Hominidae</taxon>
        <taxon>Homo</taxon>
    </lineage>
</organism>